<sequence length="311" mass="35408">MSAVWMDEQVESSARVQNSLKIEREDHKLEKRLCREVGRAIVDFNMIEEGDKVMVCVSGGKDSYAMLDILLKLQKRAPIRFDLIAVNLDQKQPGFPKHVLPDYLGKLDVPFHIENQDTYSIVKRVIPEGKTLCSLCSRLRRGILYRVAGELGATKIALGHHRDDMLQTFFLNMFFAAKLKGMPPKLVSDDGKNIVIRPMAYVPEKDLTRWAQVRDFPIIPCTLCGSQENLQRKQVGNMLREWEKKHSGRLENMFSALQNIVPSHLMDSKRHDFKNIRTTGVADAEGDKAFDAEEFSEPQRPGLSVIDIASR</sequence>
<comment type="function">
    <text evidence="1">Catalyzes the ATP-dependent 2-thiolation of cytidine in position 32 of tRNA, to form 2-thiocytidine (s(2)C32). The sulfur atoms are provided by the cysteine/cysteine desulfurase (IscS) system.</text>
</comment>
<comment type="catalytic activity">
    <reaction evidence="1">
        <text>cytidine(32) in tRNA + S-sulfanyl-L-cysteinyl-[cysteine desulfurase] + AH2 + ATP = 2-thiocytidine(32) in tRNA + L-cysteinyl-[cysteine desulfurase] + A + AMP + diphosphate + H(+)</text>
        <dbReference type="Rhea" id="RHEA:57048"/>
        <dbReference type="Rhea" id="RHEA-COMP:10288"/>
        <dbReference type="Rhea" id="RHEA-COMP:12157"/>
        <dbReference type="Rhea" id="RHEA-COMP:12158"/>
        <dbReference type="Rhea" id="RHEA-COMP:14821"/>
        <dbReference type="ChEBI" id="CHEBI:13193"/>
        <dbReference type="ChEBI" id="CHEBI:15378"/>
        <dbReference type="ChEBI" id="CHEBI:17499"/>
        <dbReference type="ChEBI" id="CHEBI:29950"/>
        <dbReference type="ChEBI" id="CHEBI:30616"/>
        <dbReference type="ChEBI" id="CHEBI:33019"/>
        <dbReference type="ChEBI" id="CHEBI:61963"/>
        <dbReference type="ChEBI" id="CHEBI:82748"/>
        <dbReference type="ChEBI" id="CHEBI:141453"/>
        <dbReference type="ChEBI" id="CHEBI:456215"/>
    </reaction>
    <physiologicalReaction direction="left-to-right" evidence="1">
        <dbReference type="Rhea" id="RHEA:57049"/>
    </physiologicalReaction>
</comment>
<comment type="cofactor">
    <cofactor evidence="1">
        <name>Mg(2+)</name>
        <dbReference type="ChEBI" id="CHEBI:18420"/>
    </cofactor>
</comment>
<comment type="cofactor">
    <cofactor evidence="1">
        <name>[4Fe-4S] cluster</name>
        <dbReference type="ChEBI" id="CHEBI:49883"/>
    </cofactor>
    <text evidence="1">Binds 1 [4Fe-4S] cluster per subunit. The cluster is chelated by three Cys residues, the fourth Fe has a free coordination site that may bind a sulfur atom transferred from the persulfide of IscS.</text>
</comment>
<comment type="pathway">
    <text evidence="1">tRNA modification.</text>
</comment>
<comment type="subunit">
    <text evidence="1">Homodimer.</text>
</comment>
<comment type="subcellular location">
    <subcellularLocation>
        <location evidence="1">Cytoplasm</location>
    </subcellularLocation>
</comment>
<comment type="miscellaneous">
    <text evidence="1">The thiolation reaction likely consists of two steps: a first activation step by ATP to form an adenylated intermediate of the target base of tRNA, and a second nucleophilic substitution step of the sulfur (S) atom supplied by the hydrosulfide attached to the Fe-S cluster.</text>
</comment>
<comment type="similarity">
    <text evidence="1">Belongs to the TtcA family.</text>
</comment>
<reference key="1">
    <citation type="journal article" date="2008" name="Appl. Environ. Microbiol.">
        <title>The genome of Polaromonas sp. strain JS666: insights into the evolution of a hydrocarbon- and xenobiotic-degrading bacterium, and features of relevance to biotechnology.</title>
        <authorList>
            <person name="Mattes T.E."/>
            <person name="Alexander A.K."/>
            <person name="Richardson P.M."/>
            <person name="Munk A.C."/>
            <person name="Han C.S."/>
            <person name="Stothard P."/>
            <person name="Coleman N.V."/>
        </authorList>
    </citation>
    <scope>NUCLEOTIDE SEQUENCE [LARGE SCALE GENOMIC DNA]</scope>
    <source>
        <strain>JS666 / ATCC BAA-500</strain>
    </source>
</reference>
<feature type="chain" id="PRO_0000348787" description="tRNA-cytidine(32) 2-sulfurtransferase">
    <location>
        <begin position="1"/>
        <end position="311"/>
    </location>
</feature>
<feature type="short sequence motif" description="PP-loop motif" evidence="1">
    <location>
        <begin position="58"/>
        <end position="63"/>
    </location>
</feature>
<feature type="binding site" evidence="1">
    <location>
        <position position="133"/>
    </location>
    <ligand>
        <name>[4Fe-4S] cluster</name>
        <dbReference type="ChEBI" id="CHEBI:49883"/>
    </ligand>
</feature>
<feature type="binding site" evidence="1">
    <location>
        <position position="136"/>
    </location>
    <ligand>
        <name>[4Fe-4S] cluster</name>
        <dbReference type="ChEBI" id="CHEBI:49883"/>
    </ligand>
</feature>
<feature type="binding site" evidence="1">
    <location>
        <position position="224"/>
    </location>
    <ligand>
        <name>[4Fe-4S] cluster</name>
        <dbReference type="ChEBI" id="CHEBI:49883"/>
    </ligand>
</feature>
<keyword id="KW-0004">4Fe-4S</keyword>
<keyword id="KW-0067">ATP-binding</keyword>
<keyword id="KW-0963">Cytoplasm</keyword>
<keyword id="KW-0408">Iron</keyword>
<keyword id="KW-0411">Iron-sulfur</keyword>
<keyword id="KW-0460">Magnesium</keyword>
<keyword id="KW-0479">Metal-binding</keyword>
<keyword id="KW-0547">Nucleotide-binding</keyword>
<keyword id="KW-1185">Reference proteome</keyword>
<keyword id="KW-0694">RNA-binding</keyword>
<keyword id="KW-0808">Transferase</keyword>
<keyword id="KW-0819">tRNA processing</keyword>
<keyword id="KW-0820">tRNA-binding</keyword>
<accession>Q124R0</accession>
<gene>
    <name evidence="1" type="primary">ttcA</name>
    <name type="ordered locus">Bpro_4089</name>
</gene>
<protein>
    <recommendedName>
        <fullName evidence="1">tRNA-cytidine(32) 2-sulfurtransferase</fullName>
        <ecNumber evidence="1">2.8.1.-</ecNumber>
    </recommendedName>
    <alternativeName>
        <fullName evidence="1">Two-thiocytidine biosynthesis protein A</fullName>
    </alternativeName>
    <alternativeName>
        <fullName evidence="1">tRNA 2-thiocytidine biosynthesis protein TtcA</fullName>
    </alternativeName>
</protein>
<proteinExistence type="inferred from homology"/>
<name>TTCA_POLSJ</name>
<dbReference type="EC" id="2.8.1.-" evidence="1"/>
<dbReference type="EMBL" id="CP000316">
    <property type="protein sequence ID" value="ABE45982.1"/>
    <property type="molecule type" value="Genomic_DNA"/>
</dbReference>
<dbReference type="RefSeq" id="WP_011484972.1">
    <property type="nucleotide sequence ID" value="NC_007948.1"/>
</dbReference>
<dbReference type="SMR" id="Q124R0"/>
<dbReference type="STRING" id="296591.Bpro_4089"/>
<dbReference type="KEGG" id="pol:Bpro_4089"/>
<dbReference type="eggNOG" id="COG0037">
    <property type="taxonomic scope" value="Bacteria"/>
</dbReference>
<dbReference type="HOGENOM" id="CLU_026481_0_0_4"/>
<dbReference type="OrthoDB" id="9801054at2"/>
<dbReference type="Proteomes" id="UP000001983">
    <property type="component" value="Chromosome"/>
</dbReference>
<dbReference type="GO" id="GO:0005737">
    <property type="term" value="C:cytoplasm"/>
    <property type="evidence" value="ECO:0007669"/>
    <property type="project" value="UniProtKB-SubCell"/>
</dbReference>
<dbReference type="GO" id="GO:0051539">
    <property type="term" value="F:4 iron, 4 sulfur cluster binding"/>
    <property type="evidence" value="ECO:0007669"/>
    <property type="project" value="UniProtKB-UniRule"/>
</dbReference>
<dbReference type="GO" id="GO:0005524">
    <property type="term" value="F:ATP binding"/>
    <property type="evidence" value="ECO:0007669"/>
    <property type="project" value="UniProtKB-UniRule"/>
</dbReference>
<dbReference type="GO" id="GO:0000287">
    <property type="term" value="F:magnesium ion binding"/>
    <property type="evidence" value="ECO:0007669"/>
    <property type="project" value="UniProtKB-UniRule"/>
</dbReference>
<dbReference type="GO" id="GO:0016783">
    <property type="term" value="F:sulfurtransferase activity"/>
    <property type="evidence" value="ECO:0007669"/>
    <property type="project" value="UniProtKB-UniRule"/>
</dbReference>
<dbReference type="GO" id="GO:0000049">
    <property type="term" value="F:tRNA binding"/>
    <property type="evidence" value="ECO:0007669"/>
    <property type="project" value="UniProtKB-KW"/>
</dbReference>
<dbReference type="GO" id="GO:0034227">
    <property type="term" value="P:tRNA thio-modification"/>
    <property type="evidence" value="ECO:0007669"/>
    <property type="project" value="UniProtKB-UniRule"/>
</dbReference>
<dbReference type="CDD" id="cd24138">
    <property type="entry name" value="TtcA-like"/>
    <property type="match status" value="1"/>
</dbReference>
<dbReference type="Gene3D" id="3.40.50.620">
    <property type="entry name" value="HUPs"/>
    <property type="match status" value="1"/>
</dbReference>
<dbReference type="HAMAP" id="MF_01850">
    <property type="entry name" value="TtcA"/>
    <property type="match status" value="1"/>
</dbReference>
<dbReference type="InterPro" id="IPR014729">
    <property type="entry name" value="Rossmann-like_a/b/a_fold"/>
</dbReference>
<dbReference type="InterPro" id="IPR011063">
    <property type="entry name" value="TilS/TtcA_N"/>
</dbReference>
<dbReference type="InterPro" id="IPR012089">
    <property type="entry name" value="tRNA_Cyd_32_2_STrfase"/>
</dbReference>
<dbReference type="InterPro" id="IPR035107">
    <property type="entry name" value="tRNA_thiolation_TtcA_Ctu1"/>
</dbReference>
<dbReference type="NCBIfam" id="NF007972">
    <property type="entry name" value="PRK10696.1"/>
    <property type="match status" value="1"/>
</dbReference>
<dbReference type="PANTHER" id="PTHR43686:SF1">
    <property type="entry name" value="AMINOTRAN_5 DOMAIN-CONTAINING PROTEIN"/>
    <property type="match status" value="1"/>
</dbReference>
<dbReference type="PANTHER" id="PTHR43686">
    <property type="entry name" value="SULFURTRANSFERASE-RELATED"/>
    <property type="match status" value="1"/>
</dbReference>
<dbReference type="Pfam" id="PF01171">
    <property type="entry name" value="ATP_bind_3"/>
    <property type="match status" value="1"/>
</dbReference>
<dbReference type="PIRSF" id="PIRSF004976">
    <property type="entry name" value="ATPase_YdaO"/>
    <property type="match status" value="1"/>
</dbReference>
<dbReference type="SUPFAM" id="SSF52402">
    <property type="entry name" value="Adenine nucleotide alpha hydrolases-like"/>
    <property type="match status" value="1"/>
</dbReference>
<evidence type="ECO:0000255" key="1">
    <source>
        <dbReference type="HAMAP-Rule" id="MF_01850"/>
    </source>
</evidence>
<organism>
    <name type="scientific">Polaromonas sp. (strain JS666 / ATCC BAA-500)</name>
    <dbReference type="NCBI Taxonomy" id="296591"/>
    <lineage>
        <taxon>Bacteria</taxon>
        <taxon>Pseudomonadati</taxon>
        <taxon>Pseudomonadota</taxon>
        <taxon>Betaproteobacteria</taxon>
        <taxon>Burkholderiales</taxon>
        <taxon>Comamonadaceae</taxon>
        <taxon>Polaromonas</taxon>
    </lineage>
</organism>